<feature type="chain" id="PRO_1000097456" description="DNA-binding protein Fis">
    <location>
        <begin position="1"/>
        <end position="98"/>
    </location>
</feature>
<feature type="DNA-binding region" description="H-T-H motif" evidence="1">
    <location>
        <begin position="74"/>
        <end position="93"/>
    </location>
</feature>
<keyword id="KW-0010">Activator</keyword>
<keyword id="KW-0238">DNA-binding</keyword>
<keyword id="KW-1185">Reference proteome</keyword>
<keyword id="KW-0804">Transcription</keyword>
<keyword id="KW-0805">Transcription regulation</keyword>
<reference key="1">
    <citation type="journal article" date="2008" name="J. Bacteriol.">
        <title>Complete genome sequence of uropathogenic Proteus mirabilis, a master of both adherence and motility.</title>
        <authorList>
            <person name="Pearson M.M."/>
            <person name="Sebaihia M."/>
            <person name="Churcher C."/>
            <person name="Quail M.A."/>
            <person name="Seshasayee A.S."/>
            <person name="Luscombe N.M."/>
            <person name="Abdellah Z."/>
            <person name="Arrosmith C."/>
            <person name="Atkin B."/>
            <person name="Chillingworth T."/>
            <person name="Hauser H."/>
            <person name="Jagels K."/>
            <person name="Moule S."/>
            <person name="Mungall K."/>
            <person name="Norbertczak H."/>
            <person name="Rabbinowitsch E."/>
            <person name="Walker D."/>
            <person name="Whithead S."/>
            <person name="Thomson N.R."/>
            <person name="Rather P.N."/>
            <person name="Parkhill J."/>
            <person name="Mobley H.L.T."/>
        </authorList>
    </citation>
    <scope>NUCLEOTIDE SEQUENCE [LARGE SCALE GENOMIC DNA]</scope>
    <source>
        <strain>HI4320</strain>
    </source>
</reference>
<gene>
    <name evidence="1" type="primary">fis</name>
    <name type="ordered locus">PMI3622</name>
</gene>
<dbReference type="EMBL" id="AM942759">
    <property type="protein sequence ID" value="CAR47078.1"/>
    <property type="molecule type" value="Genomic_DNA"/>
</dbReference>
<dbReference type="RefSeq" id="WP_004245342.1">
    <property type="nucleotide sequence ID" value="NC_010554.1"/>
</dbReference>
<dbReference type="SMR" id="B4EX21"/>
<dbReference type="EnsemblBacteria" id="CAR47078">
    <property type="protein sequence ID" value="CAR47078"/>
    <property type="gene ID" value="PMI3622"/>
</dbReference>
<dbReference type="GeneID" id="93395611"/>
<dbReference type="KEGG" id="pmr:PMI3622"/>
<dbReference type="eggNOG" id="COG2901">
    <property type="taxonomic scope" value="Bacteria"/>
</dbReference>
<dbReference type="HOGENOM" id="CLU_158040_3_0_6"/>
<dbReference type="Proteomes" id="UP000008319">
    <property type="component" value="Chromosome"/>
</dbReference>
<dbReference type="GO" id="GO:0003700">
    <property type="term" value="F:DNA-binding transcription factor activity"/>
    <property type="evidence" value="ECO:0007669"/>
    <property type="project" value="UniProtKB-UniRule"/>
</dbReference>
<dbReference type="GO" id="GO:0043565">
    <property type="term" value="F:sequence-specific DNA binding"/>
    <property type="evidence" value="ECO:0007669"/>
    <property type="project" value="InterPro"/>
</dbReference>
<dbReference type="FunFam" id="1.10.10.60:FF:000006">
    <property type="entry name" value="DNA-binding protein Fis"/>
    <property type="match status" value="1"/>
</dbReference>
<dbReference type="Gene3D" id="1.10.10.60">
    <property type="entry name" value="Homeodomain-like"/>
    <property type="match status" value="1"/>
</dbReference>
<dbReference type="HAMAP" id="MF_00166">
    <property type="entry name" value="DNA_binding_Fis"/>
    <property type="match status" value="1"/>
</dbReference>
<dbReference type="InterPro" id="IPR005412">
    <property type="entry name" value="Fis_DNA-bd"/>
</dbReference>
<dbReference type="InterPro" id="IPR009057">
    <property type="entry name" value="Homeodomain-like_sf"/>
</dbReference>
<dbReference type="InterPro" id="IPR002197">
    <property type="entry name" value="HTH_Fis"/>
</dbReference>
<dbReference type="InterPro" id="IPR050207">
    <property type="entry name" value="Trans_regulatory_Fis"/>
</dbReference>
<dbReference type="NCBIfam" id="NF001659">
    <property type="entry name" value="PRK00430.1"/>
    <property type="match status" value="1"/>
</dbReference>
<dbReference type="PANTHER" id="PTHR47918">
    <property type="entry name" value="DNA-BINDING PROTEIN FIS"/>
    <property type="match status" value="1"/>
</dbReference>
<dbReference type="PANTHER" id="PTHR47918:SF1">
    <property type="entry name" value="DNA-BINDING PROTEIN FIS"/>
    <property type="match status" value="1"/>
</dbReference>
<dbReference type="Pfam" id="PF02954">
    <property type="entry name" value="HTH_8"/>
    <property type="match status" value="1"/>
</dbReference>
<dbReference type="PIRSF" id="PIRSF002097">
    <property type="entry name" value="DNA-binding_Fis"/>
    <property type="match status" value="1"/>
</dbReference>
<dbReference type="PRINTS" id="PR01591">
    <property type="entry name" value="DNABINDNGFIS"/>
</dbReference>
<dbReference type="PRINTS" id="PR01590">
    <property type="entry name" value="HTHFIS"/>
</dbReference>
<dbReference type="SUPFAM" id="SSF46689">
    <property type="entry name" value="Homeodomain-like"/>
    <property type="match status" value="1"/>
</dbReference>
<accession>B4EX21</accession>
<organism>
    <name type="scientific">Proteus mirabilis (strain HI4320)</name>
    <dbReference type="NCBI Taxonomy" id="529507"/>
    <lineage>
        <taxon>Bacteria</taxon>
        <taxon>Pseudomonadati</taxon>
        <taxon>Pseudomonadota</taxon>
        <taxon>Gammaproteobacteria</taxon>
        <taxon>Enterobacterales</taxon>
        <taxon>Morganellaceae</taxon>
        <taxon>Proteus</taxon>
    </lineage>
</organism>
<sequence length="98" mass="11239">MFEQRVNSDVLTVATVNSQDQVTQKPLRDSVKQALKNYFAQLNGQDVNDLYELVLAEVEQPLLDMVMQYTRGNQTRAAQMMGINRGTLRKKLKKYGMN</sequence>
<proteinExistence type="inferred from homology"/>
<protein>
    <recommendedName>
        <fullName evidence="1">DNA-binding protein Fis</fullName>
    </recommendedName>
</protein>
<comment type="function">
    <text evidence="1">Activates ribosomal RNA transcription. Plays a direct role in upstream activation of rRNA promoters.</text>
</comment>
<comment type="subunit">
    <text evidence="1">Homodimer.</text>
</comment>
<comment type="similarity">
    <text evidence="1">Belongs to the transcriptional regulatory Fis family.</text>
</comment>
<name>FIS_PROMH</name>
<evidence type="ECO:0000255" key="1">
    <source>
        <dbReference type="HAMAP-Rule" id="MF_00166"/>
    </source>
</evidence>